<proteinExistence type="inferred from homology"/>
<feature type="chain" id="PRO_1000087033" description="Large ribosomal subunit protein uL6">
    <location>
        <begin position="1"/>
        <end position="187"/>
    </location>
</feature>
<feature type="region of interest" description="Disordered" evidence="2">
    <location>
        <begin position="151"/>
        <end position="170"/>
    </location>
</feature>
<accession>A9WH81</accession>
<name>RL6_CHLAA</name>
<evidence type="ECO:0000255" key="1">
    <source>
        <dbReference type="HAMAP-Rule" id="MF_01365"/>
    </source>
</evidence>
<evidence type="ECO:0000256" key="2">
    <source>
        <dbReference type="SAM" id="MobiDB-lite"/>
    </source>
</evidence>
<evidence type="ECO:0000305" key="3"/>
<comment type="function">
    <text evidence="1">This protein binds to the 23S rRNA, and is important in its secondary structure. It is located near the subunit interface in the base of the L7/L12 stalk, and near the tRNA binding site of the peptidyltransferase center.</text>
</comment>
<comment type="subunit">
    <text evidence="1">Part of the 50S ribosomal subunit.</text>
</comment>
<comment type="similarity">
    <text evidence="1">Belongs to the universal ribosomal protein uL6 family.</text>
</comment>
<sequence>MSRIGKRPITVPKGVQVTIGEQNLVTVKGPKGTLSQQLHPEMIIRQEGDVITVQRPSDGKLHRALHGLTRTLIHNMVVGVTQGWQRALEINGVGYRAQLEGKTLVLNLGFSHPVRIEPPPNISYIVGERKSANDPLALTVVGIDKQQVGEEAARIRSLRPPEPYKGKGIKYAEEKIRRKAGKAGKAK</sequence>
<dbReference type="EMBL" id="CP000909">
    <property type="protein sequence ID" value="ABY35593.1"/>
    <property type="molecule type" value="Genomic_DNA"/>
</dbReference>
<dbReference type="RefSeq" id="WP_012258246.1">
    <property type="nucleotide sequence ID" value="NC_010175.1"/>
</dbReference>
<dbReference type="RefSeq" id="YP_001635982.1">
    <property type="nucleotide sequence ID" value="NC_010175.1"/>
</dbReference>
<dbReference type="SMR" id="A9WH81"/>
<dbReference type="FunCoup" id="A9WH81">
    <property type="interactions" value="490"/>
</dbReference>
<dbReference type="STRING" id="324602.Caur_2384"/>
<dbReference type="EnsemblBacteria" id="ABY35593">
    <property type="protein sequence ID" value="ABY35593"/>
    <property type="gene ID" value="Caur_2384"/>
</dbReference>
<dbReference type="KEGG" id="cau:Caur_2384"/>
<dbReference type="PATRIC" id="fig|324602.8.peg.2698"/>
<dbReference type="eggNOG" id="COG0097">
    <property type="taxonomic scope" value="Bacteria"/>
</dbReference>
<dbReference type="HOGENOM" id="CLU_065464_1_2_0"/>
<dbReference type="InParanoid" id="A9WH81"/>
<dbReference type="Proteomes" id="UP000002008">
    <property type="component" value="Chromosome"/>
</dbReference>
<dbReference type="GO" id="GO:0022625">
    <property type="term" value="C:cytosolic large ribosomal subunit"/>
    <property type="evidence" value="ECO:0000318"/>
    <property type="project" value="GO_Central"/>
</dbReference>
<dbReference type="GO" id="GO:0019843">
    <property type="term" value="F:rRNA binding"/>
    <property type="evidence" value="ECO:0007669"/>
    <property type="project" value="UniProtKB-UniRule"/>
</dbReference>
<dbReference type="GO" id="GO:0003735">
    <property type="term" value="F:structural constituent of ribosome"/>
    <property type="evidence" value="ECO:0000318"/>
    <property type="project" value="GO_Central"/>
</dbReference>
<dbReference type="GO" id="GO:0002181">
    <property type="term" value="P:cytoplasmic translation"/>
    <property type="evidence" value="ECO:0000318"/>
    <property type="project" value="GO_Central"/>
</dbReference>
<dbReference type="FunFam" id="3.90.930.12:FF:000001">
    <property type="entry name" value="50S ribosomal protein L6"/>
    <property type="match status" value="1"/>
</dbReference>
<dbReference type="FunFam" id="3.90.930.12:FF:000002">
    <property type="entry name" value="50S ribosomal protein L6"/>
    <property type="match status" value="1"/>
</dbReference>
<dbReference type="Gene3D" id="3.90.930.12">
    <property type="entry name" value="Ribosomal protein L6, alpha-beta domain"/>
    <property type="match status" value="2"/>
</dbReference>
<dbReference type="HAMAP" id="MF_01365_B">
    <property type="entry name" value="Ribosomal_uL6_B"/>
    <property type="match status" value="1"/>
</dbReference>
<dbReference type="InterPro" id="IPR000702">
    <property type="entry name" value="Ribosomal_uL6-like"/>
</dbReference>
<dbReference type="InterPro" id="IPR036789">
    <property type="entry name" value="Ribosomal_uL6-like_a/b-dom_sf"/>
</dbReference>
<dbReference type="InterPro" id="IPR020040">
    <property type="entry name" value="Ribosomal_uL6_a/b-dom"/>
</dbReference>
<dbReference type="InterPro" id="IPR019906">
    <property type="entry name" value="Ribosomal_uL6_bac-type"/>
</dbReference>
<dbReference type="InterPro" id="IPR002358">
    <property type="entry name" value="Ribosomal_uL6_CS"/>
</dbReference>
<dbReference type="NCBIfam" id="TIGR03654">
    <property type="entry name" value="L6_bact"/>
    <property type="match status" value="1"/>
</dbReference>
<dbReference type="PANTHER" id="PTHR11655">
    <property type="entry name" value="60S/50S RIBOSOMAL PROTEIN L6/L9"/>
    <property type="match status" value="1"/>
</dbReference>
<dbReference type="PANTHER" id="PTHR11655:SF14">
    <property type="entry name" value="LARGE RIBOSOMAL SUBUNIT PROTEIN UL6M"/>
    <property type="match status" value="1"/>
</dbReference>
<dbReference type="Pfam" id="PF00347">
    <property type="entry name" value="Ribosomal_L6"/>
    <property type="match status" value="2"/>
</dbReference>
<dbReference type="PIRSF" id="PIRSF002162">
    <property type="entry name" value="Ribosomal_L6"/>
    <property type="match status" value="1"/>
</dbReference>
<dbReference type="PRINTS" id="PR00059">
    <property type="entry name" value="RIBOSOMALL6"/>
</dbReference>
<dbReference type="SUPFAM" id="SSF56053">
    <property type="entry name" value="Ribosomal protein L6"/>
    <property type="match status" value="2"/>
</dbReference>
<dbReference type="PROSITE" id="PS00525">
    <property type="entry name" value="RIBOSOMAL_L6_1"/>
    <property type="match status" value="1"/>
</dbReference>
<reference key="1">
    <citation type="journal article" date="2011" name="BMC Genomics">
        <title>Complete genome sequence of the filamentous anoxygenic phototrophic bacterium Chloroflexus aurantiacus.</title>
        <authorList>
            <person name="Tang K.H."/>
            <person name="Barry K."/>
            <person name="Chertkov O."/>
            <person name="Dalin E."/>
            <person name="Han C.S."/>
            <person name="Hauser L.J."/>
            <person name="Honchak B.M."/>
            <person name="Karbach L.E."/>
            <person name="Land M.L."/>
            <person name="Lapidus A."/>
            <person name="Larimer F.W."/>
            <person name="Mikhailova N."/>
            <person name="Pitluck S."/>
            <person name="Pierson B.K."/>
            <person name="Blankenship R.E."/>
        </authorList>
    </citation>
    <scope>NUCLEOTIDE SEQUENCE [LARGE SCALE GENOMIC DNA]</scope>
    <source>
        <strain>ATCC 29366 / DSM 635 / J-10-fl</strain>
    </source>
</reference>
<organism>
    <name type="scientific">Chloroflexus aurantiacus (strain ATCC 29366 / DSM 635 / J-10-fl)</name>
    <dbReference type="NCBI Taxonomy" id="324602"/>
    <lineage>
        <taxon>Bacteria</taxon>
        <taxon>Bacillati</taxon>
        <taxon>Chloroflexota</taxon>
        <taxon>Chloroflexia</taxon>
        <taxon>Chloroflexales</taxon>
        <taxon>Chloroflexineae</taxon>
        <taxon>Chloroflexaceae</taxon>
        <taxon>Chloroflexus</taxon>
    </lineage>
</organism>
<gene>
    <name evidence="1" type="primary">rplF</name>
    <name type="ordered locus">Caur_2384</name>
</gene>
<keyword id="KW-1185">Reference proteome</keyword>
<keyword id="KW-0687">Ribonucleoprotein</keyword>
<keyword id="KW-0689">Ribosomal protein</keyword>
<keyword id="KW-0694">RNA-binding</keyword>
<keyword id="KW-0699">rRNA-binding</keyword>
<protein>
    <recommendedName>
        <fullName evidence="1">Large ribosomal subunit protein uL6</fullName>
    </recommendedName>
    <alternativeName>
        <fullName evidence="3">50S ribosomal protein L6</fullName>
    </alternativeName>
</protein>